<protein>
    <recommendedName>
        <fullName>Secapin</fullName>
    </recommendedName>
</protein>
<proteinExistence type="evidence at transcript level"/>
<name>SECP_APICC</name>
<accession>Q7YWB0</accession>
<comment type="function">
    <text evidence="1">Nontoxic peptide.</text>
</comment>
<comment type="subcellular location">
    <subcellularLocation>
        <location evidence="1">Secreted</location>
    </subcellularLocation>
</comment>
<comment type="tissue specificity">
    <text>Expressed by the venom gland.</text>
</comment>
<comment type="similarity">
    <text evidence="3">Belongs to the secapin family.</text>
</comment>
<evidence type="ECO:0000250" key="1"/>
<evidence type="ECO:0000255" key="2"/>
<evidence type="ECO:0000305" key="3"/>
<feature type="signal peptide" evidence="2">
    <location>
        <begin position="1"/>
        <end position="32"/>
    </location>
</feature>
<feature type="propeptide" id="PRO_0000246014" evidence="1">
    <location>
        <begin position="33"/>
        <end position="52"/>
    </location>
</feature>
<feature type="peptide" id="PRO_0000246015" description="Secapin">
    <location>
        <begin position="53"/>
        <end position="77"/>
    </location>
</feature>
<feature type="disulfide bond" evidence="1">
    <location>
        <begin position="61"/>
        <end position="72"/>
    </location>
</feature>
<reference key="1">
    <citation type="submission" date="2002-02" db="EMBL/GenBank/DDBJ databases">
        <title>Cloning and sequencing of genes encoding preprosecapin from the venom of Apis cerana cerana and Apis mellifera.</title>
        <authorList>
            <person name="Zhang S.F."/>
            <person name="Shi W.J."/>
            <person name="Zhang C.X."/>
            <person name="Cheng J.A."/>
        </authorList>
    </citation>
    <scope>NUCLEOTIDE SEQUENCE [MRNA]</scope>
    <source>
        <tissue>Venom gland</tissue>
    </source>
</reference>
<organism>
    <name type="scientific">Apis cerana cerana</name>
    <name type="common">Oriental honeybee</name>
    <dbReference type="NCBI Taxonomy" id="94128"/>
    <lineage>
        <taxon>Eukaryota</taxon>
        <taxon>Metazoa</taxon>
        <taxon>Ecdysozoa</taxon>
        <taxon>Arthropoda</taxon>
        <taxon>Hexapoda</taxon>
        <taxon>Insecta</taxon>
        <taxon>Pterygota</taxon>
        <taxon>Neoptera</taxon>
        <taxon>Endopterygota</taxon>
        <taxon>Hymenoptera</taxon>
        <taxon>Apocrita</taxon>
        <taxon>Aculeata</taxon>
        <taxon>Apoidea</taxon>
        <taxon>Anthophila</taxon>
        <taxon>Apidae</taxon>
        <taxon>Apis</taxon>
    </lineage>
</organism>
<keyword id="KW-1015">Disulfide bond</keyword>
<keyword id="KW-0964">Secreted</keyword>
<keyword id="KW-0732">Signal</keyword>
<dbReference type="EMBL" id="AF487551">
    <property type="protein sequence ID" value="AAQ06245.1"/>
    <property type="molecule type" value="mRNA"/>
</dbReference>
<dbReference type="GO" id="GO:0005576">
    <property type="term" value="C:extracellular region"/>
    <property type="evidence" value="ECO:0007669"/>
    <property type="project" value="UniProtKB-SubCell"/>
</dbReference>
<dbReference type="InterPro" id="IPR020128">
    <property type="entry name" value="Secapin"/>
</dbReference>
<dbReference type="Pfam" id="PF17521">
    <property type="entry name" value="Secapin"/>
    <property type="match status" value="1"/>
</dbReference>
<sequence length="77" mass="8733">MKNYSKNATYLITVLLFSFVAMLLIIPSKCEAVSNDMQPLEARTADLVQQPRYIIDVPPRCPPGSKFVHKRCRVIVP</sequence>